<proteinExistence type="evidence at protein level"/>
<keyword id="KW-0903">Direct protein sequencing</keyword>
<keyword id="KW-0964">Secreted</keyword>
<dbReference type="EMBL" id="AM875557">
    <property type="status" value="NOT_ANNOTATED_CDS"/>
    <property type="molecule type" value="mRNA"/>
</dbReference>
<dbReference type="GO" id="GO:0005576">
    <property type="term" value="C:extracellular region"/>
    <property type="evidence" value="ECO:0007669"/>
    <property type="project" value="UniProtKB-SubCell"/>
</dbReference>
<protein>
    <recommendedName>
        <fullName evidence="3">Insoluble matrix shell protein 1</fullName>
        <shortName evidence="3">IMSP1</shortName>
    </recommendedName>
</protein>
<evidence type="ECO:0000256" key="1">
    <source>
        <dbReference type="SAM" id="MobiDB-lite"/>
    </source>
</evidence>
<evidence type="ECO:0000269" key="2">
    <source>
    </source>
</evidence>
<evidence type="ECO:0000303" key="3">
    <source>
    </source>
</evidence>
<evidence type="ECO:0000305" key="4"/>
<organism>
    <name type="scientific">Ruditapes philippinarum</name>
    <name type="common">Japanese carpet shell</name>
    <name type="synonym">Venerupis philippinarum</name>
    <dbReference type="NCBI Taxonomy" id="129788"/>
    <lineage>
        <taxon>Eukaryota</taxon>
        <taxon>Metazoa</taxon>
        <taxon>Spiralia</taxon>
        <taxon>Lophotrochozoa</taxon>
        <taxon>Mollusca</taxon>
        <taxon>Bivalvia</taxon>
        <taxon>Autobranchia</taxon>
        <taxon>Heteroconchia</taxon>
        <taxon>Euheterodonta</taxon>
        <taxon>Imparidentia</taxon>
        <taxon>Neoheterodontei</taxon>
        <taxon>Venerida</taxon>
        <taxon>Veneroidea</taxon>
        <taxon>Veneridae</taxon>
        <taxon>Ruditapes</taxon>
    </lineage>
</organism>
<name>IMSP1_RUDPH</name>
<comment type="subcellular location">
    <subcellularLocation>
        <location evidence="2">Secreted</location>
    </subcellularLocation>
</comment>
<comment type="tissue specificity">
    <text evidence="2">Component of the acid-insoluble organic matrix of the calcified shell.</text>
</comment>
<feature type="chain" id="PRO_0000413025" description="Insoluble matrix shell protein 1">
    <location>
        <begin position="1"/>
        <end position="148"/>
    </location>
</feature>
<feature type="region of interest" description="Disordered" evidence="1">
    <location>
        <begin position="105"/>
        <end position="128"/>
    </location>
</feature>
<feature type="non-terminal residue" evidence="3">
    <location>
        <position position="1"/>
    </location>
</feature>
<reference evidence="4" key="1">
    <citation type="submission" date="2007-09" db="EMBL/GenBank/DDBJ databases">
        <authorList>
            <person name="Beck A."/>
        </authorList>
    </citation>
    <scope>NUCLEOTIDE SEQUENCE [MRNA]</scope>
</reference>
<reference evidence="4" key="2">
    <citation type="journal article" date="2011" name="Mar. Biotechnol.">
        <title>Proteomic identification of novel proteins from the calcifying shell matrix of the manila clam Venerupis Philippinarum.</title>
        <authorList>
            <person name="Marie B."/>
            <person name="Trinkler N."/>
            <person name="Zanella-Cleon I."/>
            <person name="Guichard N."/>
            <person name="Becchi M."/>
            <person name="Paillard C."/>
            <person name="Marin F."/>
        </authorList>
    </citation>
    <scope>PROTEIN SEQUENCE OF 11-23 AND 130-144</scope>
    <source>
        <tissue evidence="2">Shell</tissue>
    </source>
</reference>
<sequence>RQAARVCSTRFQPENWNIDPIQRRNNCYNYATNIQTNTFAQPGRASGRRYRENVGGEVYSACLRDGLTGLRAPDAGTECLIALVVWPGEDYHFYRLDNNGYWSHKSGRTEARNTDDSGDPIIDPRTADRGPYSDFVGWLGVGPRARVN</sequence>
<accession>P86982</accession>